<gene>
    <name evidence="2" type="primary">sfnG</name>
</gene>
<reference key="1">
    <citation type="journal article" date="2003" name="Appl. Microbiol. Biotechnol.">
        <title>Characterization and identification of genes essential for dimethyl sulfide utilization in Pseudomonas putida strain DS1.</title>
        <authorList>
            <person name="Endoh T."/>
            <person name="Kasuga K."/>
            <person name="Horinouchi M."/>
            <person name="Yoshida T."/>
            <person name="Habe H."/>
            <person name="Nojiri H."/>
            <person name="Omori T."/>
        </authorList>
    </citation>
    <scope>NUCLEOTIDE SEQUENCE [GENOMIC DNA]</scope>
    <source>
        <strain evidence="4">DS1</strain>
    </source>
</reference>
<reference key="2">
    <citation type="journal article" date="2003" name="Microbiology (Mosc.)">
        <title>A CysB-regulated and sigma54-dependent regulator, SfnR, is essential for dimethyl sulfone metabolism of Pseudomonas putida strain DS1.</title>
        <authorList>
            <person name="Endoh T."/>
            <person name="Habe H."/>
            <person name="Yoshida T."/>
            <person name="Nojiri H."/>
            <person name="Omori T."/>
        </authorList>
    </citation>
    <scope>NUCLEOTIDE SEQUENCE [GENOMIC DNA]</scope>
    <source>
        <strain evidence="4">DS1</strain>
    </source>
</reference>
<reference key="3">
    <citation type="journal article" date="2005" name="Mol. Microbiol.">
        <title>The sigma54-dependent transcriptional activator SfnR regulates the expression of the Pseudomonas putida sfnFG operon responsible for dimethyl sulphone utilization.</title>
        <authorList>
            <person name="Endoh T."/>
            <person name="Habe H."/>
            <person name="Nojiri H."/>
            <person name="Yamane H."/>
            <person name="Omori T."/>
        </authorList>
    </citation>
    <scope>NUCLEOTIDE SEQUENCE [GENOMIC DNA]</scope>
    <scope>FUNCTION</scope>
    <scope>CATALYTIC ACTIVITY</scope>
    <scope>DISRUPTION PHENOTYPE</scope>
    <scope>INDUCTION</scope>
    <source>
        <strain evidence="4">DS1</strain>
    </source>
</reference>
<protein>
    <recommendedName>
        <fullName evidence="2">FMNH(2)-dependent dimethylsulfone monooxygenase</fullName>
        <ecNumber evidence="1">1.14.14.35</ecNumber>
    </recommendedName>
</protein>
<accession>Q65YW9</accession>
<dbReference type="EC" id="1.14.14.35" evidence="1"/>
<dbReference type="EMBL" id="AB174850">
    <property type="protein sequence ID" value="BAD51730.1"/>
    <property type="molecule type" value="Genomic_DNA"/>
</dbReference>
<dbReference type="SMR" id="Q65YW9"/>
<dbReference type="BioCyc" id="MetaCyc:MONOMER-14251"/>
<dbReference type="BRENDA" id="1.14.14.35">
    <property type="organism ID" value="5092"/>
</dbReference>
<dbReference type="GO" id="GO:0008726">
    <property type="term" value="F:alkanesulfonate monooxygenase activity"/>
    <property type="evidence" value="ECO:0007669"/>
    <property type="project" value="TreeGrafter"/>
</dbReference>
<dbReference type="GO" id="GO:0046306">
    <property type="term" value="P:alkanesulfonate catabolic process"/>
    <property type="evidence" value="ECO:0007669"/>
    <property type="project" value="TreeGrafter"/>
</dbReference>
<dbReference type="CDD" id="cd01094">
    <property type="entry name" value="Alkanesulfonate_monoxygenase"/>
    <property type="match status" value="1"/>
</dbReference>
<dbReference type="Gene3D" id="3.20.20.30">
    <property type="entry name" value="Luciferase-like domain"/>
    <property type="match status" value="1"/>
</dbReference>
<dbReference type="InterPro" id="IPR024014">
    <property type="entry name" value="DMSO2_SphG"/>
</dbReference>
<dbReference type="InterPro" id="IPR011251">
    <property type="entry name" value="Luciferase-like_dom"/>
</dbReference>
<dbReference type="InterPro" id="IPR036661">
    <property type="entry name" value="Luciferase-like_sf"/>
</dbReference>
<dbReference type="InterPro" id="IPR050172">
    <property type="entry name" value="SsuD_RutA_monooxygenase"/>
</dbReference>
<dbReference type="NCBIfam" id="TIGR04021">
    <property type="entry name" value="LLM_DMSO2_sfnG"/>
    <property type="match status" value="1"/>
</dbReference>
<dbReference type="PANTHER" id="PTHR42847">
    <property type="entry name" value="ALKANESULFONATE MONOOXYGENASE"/>
    <property type="match status" value="1"/>
</dbReference>
<dbReference type="PANTHER" id="PTHR42847:SF4">
    <property type="entry name" value="ALKANESULFONATE MONOOXYGENASE-RELATED"/>
    <property type="match status" value="1"/>
</dbReference>
<dbReference type="Pfam" id="PF00296">
    <property type="entry name" value="Bac_luciferase"/>
    <property type="match status" value="1"/>
</dbReference>
<dbReference type="SUPFAM" id="SSF51679">
    <property type="entry name" value="Bacterial luciferase-like"/>
    <property type="match status" value="1"/>
</dbReference>
<comment type="function">
    <text evidence="1">Involved in the dimethyl sulfide degradation pathway. Catalyzes the oxidation of dimethylsulfone (DMSO2) to yield methanesulfinate, which is oxidized spontaneously to methanesulfonate in the presence of dioxygen and FMNH(2).</text>
</comment>
<comment type="catalytic activity">
    <reaction evidence="1">
        <text>dimethyl sulfone + FMNH2 + O2 = methanesulfinate + FMN + formaldehyde + H2O + 2 H(+)</text>
        <dbReference type="Rhea" id="RHEA:50716"/>
        <dbReference type="ChEBI" id="CHEBI:9349"/>
        <dbReference type="ChEBI" id="CHEBI:15377"/>
        <dbReference type="ChEBI" id="CHEBI:15378"/>
        <dbReference type="ChEBI" id="CHEBI:15379"/>
        <dbReference type="ChEBI" id="CHEBI:16842"/>
        <dbReference type="ChEBI" id="CHEBI:57618"/>
        <dbReference type="ChEBI" id="CHEBI:58210"/>
        <dbReference type="ChEBI" id="CHEBI:133603"/>
        <dbReference type="EC" id="1.14.14.35"/>
    </reaction>
</comment>
<comment type="induction">
    <text evidence="1">Transcriptionally activated by SfnR.</text>
</comment>
<comment type="disruption phenotype">
    <text evidence="1">Cells lacking this gene are unable to grow on dimethyl sulfide (DMS), dimethylsulfone (DMSO2) and diethyl sulphone (DESO2).</text>
</comment>
<comment type="similarity">
    <text evidence="3">Belongs to the SsuD family.</text>
</comment>
<keyword id="KW-0285">Flavoprotein</keyword>
<keyword id="KW-0288">FMN</keyword>
<keyword id="KW-0503">Monooxygenase</keyword>
<keyword id="KW-0560">Oxidoreductase</keyword>
<organism>
    <name type="scientific">Pseudomonas putida</name>
    <name type="common">Arthrobacter siderocapsulatus</name>
    <dbReference type="NCBI Taxonomy" id="303"/>
    <lineage>
        <taxon>Bacteria</taxon>
        <taxon>Pseudomonadati</taxon>
        <taxon>Pseudomonadota</taxon>
        <taxon>Gammaproteobacteria</taxon>
        <taxon>Pseudomonadales</taxon>
        <taxon>Pseudomonadaceae</taxon>
        <taxon>Pseudomonas</taxon>
    </lineage>
</organism>
<proteinExistence type="evidence at protein level"/>
<feature type="chain" id="PRO_0000443538" description="FMNH(2)-dependent dimethylsulfone monooxygenase">
    <location>
        <begin position="1"/>
        <end position="363"/>
    </location>
</feature>
<evidence type="ECO:0000269" key="1">
    <source>
    </source>
</evidence>
<evidence type="ECO:0000303" key="2">
    <source>
    </source>
</evidence>
<evidence type="ECO:0000305" key="3"/>
<evidence type="ECO:0000312" key="4">
    <source>
        <dbReference type="EMBL" id="BAD51730.1"/>
    </source>
</evidence>
<name>SFNG_PSEPU</name>
<sequence>MSQPIKFAYWVPNVSGGLVVSKIEQRTSWDIDYNRKLAQIAERSGFEYALSQIRFTAGYGADNQHESVTISHALLAATEKLKVIAAILPGPWSPALAAKQLATIDQFTGGRIAVNVVSGWFKGEFRAIGEPWLEHDERYRRSEEFIRALKGIWTQDNFSFHGDFYRFNDYTLKPKPLQRPHPEIFQGGSSRAARDMASRVSDWYFTNGNSVEGIKAQVDDIRAKAAANGHAVKIGVNAFVIARDTEEEARAVLAEIIAKADPEAVNGFGSEVKNAGAASPEGEGNWAKSTFEDLVQYNDGFKTNLIGTPRQIAERIVALKAIGVDLILSGFLHFQEEVEYFGRHVLPLVRELEQERRAAVAVA</sequence>